<protein>
    <recommendedName>
        <fullName>5-formyltetrahydrofolate cyclo-ligase</fullName>
        <ecNumber>6.3.3.2</ecNumber>
    </recommendedName>
    <alternativeName>
        <fullName>5,10-methenyl-tetrahydrofolate synthetase</fullName>
        <shortName>MTHFS</shortName>
        <shortName>Methenyl-THF synthetase</shortName>
    </alternativeName>
</protein>
<feature type="initiator methionine" description="Removed" evidence="2">
    <location>
        <position position="1"/>
    </location>
</feature>
<feature type="chain" id="PRO_0000200276" description="5-formyltetrahydrofolate cyclo-ligase">
    <location>
        <begin position="2"/>
        <end position="203"/>
    </location>
</feature>
<feature type="binding site" evidence="1">
    <location>
        <begin position="10"/>
        <end position="14"/>
    </location>
    <ligand>
        <name>ATP</name>
        <dbReference type="ChEBI" id="CHEBI:30616"/>
    </ligand>
</feature>
<feature type="binding site" evidence="1">
    <location>
        <position position="14"/>
    </location>
    <ligand>
        <name>ATP</name>
        <dbReference type="ChEBI" id="CHEBI:30616"/>
    </ligand>
</feature>
<feature type="binding site" evidence="1">
    <location>
        <position position="56"/>
    </location>
    <ligand>
        <name>substrate</name>
    </ligand>
</feature>
<feature type="binding site" evidence="1">
    <location>
        <position position="61"/>
    </location>
    <ligand>
        <name>substrate</name>
    </ligand>
</feature>
<feature type="binding site" evidence="1">
    <location>
        <begin position="145"/>
        <end position="153"/>
    </location>
    <ligand>
        <name>ATP</name>
        <dbReference type="ChEBI" id="CHEBI:30616"/>
    </ligand>
</feature>
<feature type="binding site" evidence="1">
    <location>
        <begin position="148"/>
        <end position="152"/>
    </location>
    <ligand>
        <name>substrate</name>
    </ligand>
</feature>
<feature type="binding site" evidence="1">
    <location>
        <position position="154"/>
    </location>
    <ligand>
        <name>Mg(2+)</name>
        <dbReference type="ChEBI" id="CHEBI:18420"/>
    </ligand>
</feature>
<feature type="binding site" evidence="1">
    <location>
        <position position="189"/>
    </location>
    <ligand>
        <name>Mg(2+)</name>
        <dbReference type="ChEBI" id="CHEBI:18420"/>
    </ligand>
</feature>
<feature type="modified residue" description="N-acetylalanine" evidence="2">
    <location>
        <position position="2"/>
    </location>
</feature>
<accession>Q9D110</accession>
<accession>B2KF82</accession>
<dbReference type="EC" id="6.3.3.2"/>
<dbReference type="EMBL" id="AK004092">
    <property type="protein sequence ID" value="BAB23165.1"/>
    <property type="molecule type" value="mRNA"/>
</dbReference>
<dbReference type="EMBL" id="AC135634">
    <property type="status" value="NOT_ANNOTATED_CDS"/>
    <property type="molecule type" value="Genomic_DNA"/>
</dbReference>
<dbReference type="EMBL" id="CT030686">
    <property type="status" value="NOT_ANNOTATED_CDS"/>
    <property type="molecule type" value="Genomic_DNA"/>
</dbReference>
<dbReference type="CCDS" id="CCDS23394.1"/>
<dbReference type="RefSeq" id="NP_081105.1">
    <property type="nucleotide sequence ID" value="NM_026829.2"/>
</dbReference>
<dbReference type="SMR" id="Q9D110"/>
<dbReference type="BioGRID" id="223657">
    <property type="interactions" value="2"/>
</dbReference>
<dbReference type="FunCoup" id="Q9D110">
    <property type="interactions" value="1334"/>
</dbReference>
<dbReference type="STRING" id="10090.ENSMUSP00000082354"/>
<dbReference type="iPTMnet" id="Q9D110"/>
<dbReference type="PhosphoSitePlus" id="Q9D110"/>
<dbReference type="SwissPalm" id="Q9D110"/>
<dbReference type="jPOST" id="Q9D110"/>
<dbReference type="PaxDb" id="10090-ENSMUSP00000082354"/>
<dbReference type="PeptideAtlas" id="Q9D110"/>
<dbReference type="ProteomicsDB" id="291363"/>
<dbReference type="Pumba" id="Q9D110"/>
<dbReference type="DNASU" id="107885"/>
<dbReference type="Ensembl" id="ENSMUST00000085256.8">
    <property type="protein sequence ID" value="ENSMUSP00000082354.7"/>
    <property type="gene ID" value="ENSMUSG00000066442.18"/>
</dbReference>
<dbReference type="GeneID" id="107885"/>
<dbReference type="KEGG" id="mmu:107885"/>
<dbReference type="UCSC" id="uc009qzk.1">
    <property type="organism name" value="mouse"/>
</dbReference>
<dbReference type="AGR" id="MGI:1340032"/>
<dbReference type="CTD" id="10588"/>
<dbReference type="MGI" id="MGI:1340032">
    <property type="gene designation" value="Mthfs"/>
</dbReference>
<dbReference type="VEuPathDB" id="HostDB:ENSMUSG00000066442"/>
<dbReference type="eggNOG" id="KOG3093">
    <property type="taxonomic scope" value="Eukaryota"/>
</dbReference>
<dbReference type="GeneTree" id="ENSGT00390000017791"/>
<dbReference type="HOGENOM" id="CLU_066245_2_1_1"/>
<dbReference type="InParanoid" id="Q9D110"/>
<dbReference type="OMA" id="STIYPCQ"/>
<dbReference type="OrthoDB" id="47586at9989"/>
<dbReference type="PhylomeDB" id="Q9D110"/>
<dbReference type="TreeFam" id="TF313668"/>
<dbReference type="BRENDA" id="6.3.3.2">
    <property type="organism ID" value="3474"/>
</dbReference>
<dbReference type="Reactome" id="R-MMU-196757">
    <property type="pathway name" value="Metabolism of folate and pterines"/>
</dbReference>
<dbReference type="BioGRID-ORCS" id="107885">
    <property type="hits" value="2 hits in 45 CRISPR screens"/>
</dbReference>
<dbReference type="ChiTaRS" id="Mthfs">
    <property type="organism name" value="mouse"/>
</dbReference>
<dbReference type="PRO" id="PR:Q9D110"/>
<dbReference type="Proteomes" id="UP000000589">
    <property type="component" value="Chromosome 9"/>
</dbReference>
<dbReference type="RNAct" id="Q9D110">
    <property type="molecule type" value="protein"/>
</dbReference>
<dbReference type="Bgee" id="ENSMUSG00000066442">
    <property type="expression patterns" value="Expressed in granulocyte and 93 other cell types or tissues"/>
</dbReference>
<dbReference type="ExpressionAtlas" id="Q9D110">
    <property type="expression patterns" value="baseline and differential"/>
</dbReference>
<dbReference type="GO" id="GO:0005739">
    <property type="term" value="C:mitochondrion"/>
    <property type="evidence" value="ECO:0007005"/>
    <property type="project" value="MGI"/>
</dbReference>
<dbReference type="GO" id="GO:0030272">
    <property type="term" value="F:5-formyltetrahydrofolate cyclo-ligase activity"/>
    <property type="evidence" value="ECO:0000250"/>
    <property type="project" value="UniProtKB"/>
</dbReference>
<dbReference type="GO" id="GO:0005524">
    <property type="term" value="F:ATP binding"/>
    <property type="evidence" value="ECO:0007669"/>
    <property type="project" value="UniProtKB-KW"/>
</dbReference>
<dbReference type="GO" id="GO:0005542">
    <property type="term" value="F:folic acid binding"/>
    <property type="evidence" value="ECO:0007669"/>
    <property type="project" value="UniProtKB-KW"/>
</dbReference>
<dbReference type="GO" id="GO:0046872">
    <property type="term" value="F:metal ion binding"/>
    <property type="evidence" value="ECO:0007669"/>
    <property type="project" value="UniProtKB-KW"/>
</dbReference>
<dbReference type="GO" id="GO:0046653">
    <property type="term" value="P:tetrahydrofolate metabolic process"/>
    <property type="evidence" value="ECO:0000250"/>
    <property type="project" value="UniProtKB"/>
</dbReference>
<dbReference type="FunFam" id="3.40.50.10420:FF:000002">
    <property type="entry name" value="5-formyltetrahydrofolate cyclo-ligase"/>
    <property type="match status" value="1"/>
</dbReference>
<dbReference type="Gene3D" id="3.40.50.10420">
    <property type="entry name" value="NagB/RpiA/CoA transferase-like"/>
    <property type="match status" value="1"/>
</dbReference>
<dbReference type="InterPro" id="IPR002698">
    <property type="entry name" value="FTHF_cligase"/>
</dbReference>
<dbReference type="InterPro" id="IPR024185">
    <property type="entry name" value="FTHF_cligase-like_sf"/>
</dbReference>
<dbReference type="InterPro" id="IPR037171">
    <property type="entry name" value="NagB/RpiA_transferase-like"/>
</dbReference>
<dbReference type="NCBIfam" id="TIGR02727">
    <property type="entry name" value="MTHFS_bact"/>
    <property type="match status" value="1"/>
</dbReference>
<dbReference type="PANTHER" id="PTHR23407:SF1">
    <property type="entry name" value="5-FORMYLTETRAHYDROFOLATE CYCLO-LIGASE"/>
    <property type="match status" value="1"/>
</dbReference>
<dbReference type="PANTHER" id="PTHR23407">
    <property type="entry name" value="ATPASE INHIBITOR/5-FORMYLTETRAHYDROFOLATE CYCLO-LIGASE"/>
    <property type="match status" value="1"/>
</dbReference>
<dbReference type="Pfam" id="PF01812">
    <property type="entry name" value="5-FTHF_cyc-lig"/>
    <property type="match status" value="1"/>
</dbReference>
<dbReference type="PIRSF" id="PIRSF006806">
    <property type="entry name" value="FTHF_cligase"/>
    <property type="match status" value="1"/>
</dbReference>
<dbReference type="SUPFAM" id="SSF100950">
    <property type="entry name" value="NagB/RpiA/CoA transferase-like"/>
    <property type="match status" value="1"/>
</dbReference>
<sequence length="203" mass="23202">MAAVTVNSAKRGLRAELKQRLRALSAEERLRQSLLLTQKVIAHNQYQNSKRISIFLSMQDEVETEVIIKDIFKQGKICFIPRYQFQSNHMDMVRLTSSEEIALLPKTSWNIHQPGEGDVREEALSTGGLDLIFLPGLGFDKDGNRLGRGKGYYDTYLKRCVQHQEVKPYTMALAFKEQICPQIPVDEHDMKVDEVLYEDSPAS</sequence>
<organism>
    <name type="scientific">Mus musculus</name>
    <name type="common">Mouse</name>
    <dbReference type="NCBI Taxonomy" id="10090"/>
    <lineage>
        <taxon>Eukaryota</taxon>
        <taxon>Metazoa</taxon>
        <taxon>Chordata</taxon>
        <taxon>Craniata</taxon>
        <taxon>Vertebrata</taxon>
        <taxon>Euteleostomi</taxon>
        <taxon>Mammalia</taxon>
        <taxon>Eutheria</taxon>
        <taxon>Euarchontoglires</taxon>
        <taxon>Glires</taxon>
        <taxon>Rodentia</taxon>
        <taxon>Myomorpha</taxon>
        <taxon>Muroidea</taxon>
        <taxon>Muridae</taxon>
        <taxon>Murinae</taxon>
        <taxon>Mus</taxon>
        <taxon>Mus</taxon>
    </lineage>
</organism>
<evidence type="ECO:0000250" key="1"/>
<evidence type="ECO:0000250" key="2">
    <source>
        <dbReference type="UniProtKB" id="P49914"/>
    </source>
</evidence>
<evidence type="ECO:0000305" key="3"/>
<keyword id="KW-0007">Acetylation</keyword>
<keyword id="KW-0067">ATP-binding</keyword>
<keyword id="KW-0963">Cytoplasm</keyword>
<keyword id="KW-0290">Folate-binding</keyword>
<keyword id="KW-0436">Ligase</keyword>
<keyword id="KW-0460">Magnesium</keyword>
<keyword id="KW-0479">Metal-binding</keyword>
<keyword id="KW-0547">Nucleotide-binding</keyword>
<keyword id="KW-1185">Reference proteome</keyword>
<gene>
    <name type="primary">Mthfs</name>
</gene>
<name>MTHFS_MOUSE</name>
<proteinExistence type="evidence at transcript level"/>
<reference key="1">
    <citation type="journal article" date="2005" name="Science">
        <title>The transcriptional landscape of the mammalian genome.</title>
        <authorList>
            <person name="Carninci P."/>
            <person name="Kasukawa T."/>
            <person name="Katayama S."/>
            <person name="Gough J."/>
            <person name="Frith M.C."/>
            <person name="Maeda N."/>
            <person name="Oyama R."/>
            <person name="Ravasi T."/>
            <person name="Lenhard B."/>
            <person name="Wells C."/>
            <person name="Kodzius R."/>
            <person name="Shimokawa K."/>
            <person name="Bajic V.B."/>
            <person name="Brenner S.E."/>
            <person name="Batalov S."/>
            <person name="Forrest A.R."/>
            <person name="Zavolan M."/>
            <person name="Davis M.J."/>
            <person name="Wilming L.G."/>
            <person name="Aidinis V."/>
            <person name="Allen J.E."/>
            <person name="Ambesi-Impiombato A."/>
            <person name="Apweiler R."/>
            <person name="Aturaliya R.N."/>
            <person name="Bailey T.L."/>
            <person name="Bansal M."/>
            <person name="Baxter L."/>
            <person name="Beisel K.W."/>
            <person name="Bersano T."/>
            <person name="Bono H."/>
            <person name="Chalk A.M."/>
            <person name="Chiu K.P."/>
            <person name="Choudhary V."/>
            <person name="Christoffels A."/>
            <person name="Clutterbuck D.R."/>
            <person name="Crowe M.L."/>
            <person name="Dalla E."/>
            <person name="Dalrymple B.P."/>
            <person name="de Bono B."/>
            <person name="Della Gatta G."/>
            <person name="di Bernardo D."/>
            <person name="Down T."/>
            <person name="Engstrom P."/>
            <person name="Fagiolini M."/>
            <person name="Faulkner G."/>
            <person name="Fletcher C.F."/>
            <person name="Fukushima T."/>
            <person name="Furuno M."/>
            <person name="Futaki S."/>
            <person name="Gariboldi M."/>
            <person name="Georgii-Hemming P."/>
            <person name="Gingeras T.R."/>
            <person name="Gojobori T."/>
            <person name="Green R.E."/>
            <person name="Gustincich S."/>
            <person name="Harbers M."/>
            <person name="Hayashi Y."/>
            <person name="Hensch T.K."/>
            <person name="Hirokawa N."/>
            <person name="Hill D."/>
            <person name="Huminiecki L."/>
            <person name="Iacono M."/>
            <person name="Ikeo K."/>
            <person name="Iwama A."/>
            <person name="Ishikawa T."/>
            <person name="Jakt M."/>
            <person name="Kanapin A."/>
            <person name="Katoh M."/>
            <person name="Kawasawa Y."/>
            <person name="Kelso J."/>
            <person name="Kitamura H."/>
            <person name="Kitano H."/>
            <person name="Kollias G."/>
            <person name="Krishnan S.P."/>
            <person name="Kruger A."/>
            <person name="Kummerfeld S.K."/>
            <person name="Kurochkin I.V."/>
            <person name="Lareau L.F."/>
            <person name="Lazarevic D."/>
            <person name="Lipovich L."/>
            <person name="Liu J."/>
            <person name="Liuni S."/>
            <person name="McWilliam S."/>
            <person name="Madan Babu M."/>
            <person name="Madera M."/>
            <person name="Marchionni L."/>
            <person name="Matsuda H."/>
            <person name="Matsuzawa S."/>
            <person name="Miki H."/>
            <person name="Mignone F."/>
            <person name="Miyake S."/>
            <person name="Morris K."/>
            <person name="Mottagui-Tabar S."/>
            <person name="Mulder N."/>
            <person name="Nakano N."/>
            <person name="Nakauchi H."/>
            <person name="Ng P."/>
            <person name="Nilsson R."/>
            <person name="Nishiguchi S."/>
            <person name="Nishikawa S."/>
            <person name="Nori F."/>
            <person name="Ohara O."/>
            <person name="Okazaki Y."/>
            <person name="Orlando V."/>
            <person name="Pang K.C."/>
            <person name="Pavan W.J."/>
            <person name="Pavesi G."/>
            <person name="Pesole G."/>
            <person name="Petrovsky N."/>
            <person name="Piazza S."/>
            <person name="Reed J."/>
            <person name="Reid J.F."/>
            <person name="Ring B.Z."/>
            <person name="Ringwald M."/>
            <person name="Rost B."/>
            <person name="Ruan Y."/>
            <person name="Salzberg S.L."/>
            <person name="Sandelin A."/>
            <person name="Schneider C."/>
            <person name="Schoenbach C."/>
            <person name="Sekiguchi K."/>
            <person name="Semple C.A."/>
            <person name="Seno S."/>
            <person name="Sessa L."/>
            <person name="Sheng Y."/>
            <person name="Shibata Y."/>
            <person name="Shimada H."/>
            <person name="Shimada K."/>
            <person name="Silva D."/>
            <person name="Sinclair B."/>
            <person name="Sperling S."/>
            <person name="Stupka E."/>
            <person name="Sugiura K."/>
            <person name="Sultana R."/>
            <person name="Takenaka Y."/>
            <person name="Taki K."/>
            <person name="Tammoja K."/>
            <person name="Tan S.L."/>
            <person name="Tang S."/>
            <person name="Taylor M.S."/>
            <person name="Tegner J."/>
            <person name="Teichmann S.A."/>
            <person name="Ueda H.R."/>
            <person name="van Nimwegen E."/>
            <person name="Verardo R."/>
            <person name="Wei C.L."/>
            <person name="Yagi K."/>
            <person name="Yamanishi H."/>
            <person name="Zabarovsky E."/>
            <person name="Zhu S."/>
            <person name="Zimmer A."/>
            <person name="Hide W."/>
            <person name="Bult C."/>
            <person name="Grimmond S.M."/>
            <person name="Teasdale R.D."/>
            <person name="Liu E.T."/>
            <person name="Brusic V."/>
            <person name="Quackenbush J."/>
            <person name="Wahlestedt C."/>
            <person name="Mattick J.S."/>
            <person name="Hume D.A."/>
            <person name="Kai C."/>
            <person name="Sasaki D."/>
            <person name="Tomaru Y."/>
            <person name="Fukuda S."/>
            <person name="Kanamori-Katayama M."/>
            <person name="Suzuki M."/>
            <person name="Aoki J."/>
            <person name="Arakawa T."/>
            <person name="Iida J."/>
            <person name="Imamura K."/>
            <person name="Itoh M."/>
            <person name="Kato T."/>
            <person name="Kawaji H."/>
            <person name="Kawagashira N."/>
            <person name="Kawashima T."/>
            <person name="Kojima M."/>
            <person name="Kondo S."/>
            <person name="Konno H."/>
            <person name="Nakano K."/>
            <person name="Ninomiya N."/>
            <person name="Nishio T."/>
            <person name="Okada M."/>
            <person name="Plessy C."/>
            <person name="Shibata K."/>
            <person name="Shiraki T."/>
            <person name="Suzuki S."/>
            <person name="Tagami M."/>
            <person name="Waki K."/>
            <person name="Watahiki A."/>
            <person name="Okamura-Oho Y."/>
            <person name="Suzuki H."/>
            <person name="Kawai J."/>
            <person name="Hayashizaki Y."/>
        </authorList>
    </citation>
    <scope>NUCLEOTIDE SEQUENCE [LARGE SCALE MRNA]</scope>
    <source>
        <strain>C57BL/6J</strain>
        <tissue>Embryo</tissue>
    </source>
</reference>
<reference key="2">
    <citation type="journal article" date="2009" name="PLoS Biol.">
        <title>Lineage-specific biology revealed by a finished genome assembly of the mouse.</title>
        <authorList>
            <person name="Church D.M."/>
            <person name="Goodstadt L."/>
            <person name="Hillier L.W."/>
            <person name="Zody M.C."/>
            <person name="Goldstein S."/>
            <person name="She X."/>
            <person name="Bult C.J."/>
            <person name="Agarwala R."/>
            <person name="Cherry J.L."/>
            <person name="DiCuccio M."/>
            <person name="Hlavina W."/>
            <person name="Kapustin Y."/>
            <person name="Meric P."/>
            <person name="Maglott D."/>
            <person name="Birtle Z."/>
            <person name="Marques A.C."/>
            <person name="Graves T."/>
            <person name="Zhou S."/>
            <person name="Teague B."/>
            <person name="Potamousis K."/>
            <person name="Churas C."/>
            <person name="Place M."/>
            <person name="Herschleb J."/>
            <person name="Runnheim R."/>
            <person name="Forrest D."/>
            <person name="Amos-Landgraf J."/>
            <person name="Schwartz D.C."/>
            <person name="Cheng Z."/>
            <person name="Lindblad-Toh K."/>
            <person name="Eichler E.E."/>
            <person name="Ponting C.P."/>
        </authorList>
    </citation>
    <scope>NUCLEOTIDE SEQUENCE [LARGE SCALE GENOMIC DNA]</scope>
    <source>
        <strain>C57BL/6J</strain>
    </source>
</reference>
<comment type="function">
    <text evidence="1">Contributes to tetrahydrofolate metabolism. Helps regulate carbon flow through the folate-dependent one-carbon metabolic network that supplies carbon for the biosynthesis of purines, thymidine and amino acids. Catalyzes the irreversible conversion of 5-formyltetrahydrofolate (5-CHO-H(4)PteGlu) to yield 5,10-methenyltetrahydrofolate (By similarity).</text>
</comment>
<comment type="catalytic activity">
    <reaction>
        <text>(6S)-5-formyl-5,6,7,8-tetrahydrofolate + ATP = (6R)-5,10-methenyltetrahydrofolate + ADP + phosphate</text>
        <dbReference type="Rhea" id="RHEA:10488"/>
        <dbReference type="ChEBI" id="CHEBI:30616"/>
        <dbReference type="ChEBI" id="CHEBI:43474"/>
        <dbReference type="ChEBI" id="CHEBI:57455"/>
        <dbReference type="ChEBI" id="CHEBI:57457"/>
        <dbReference type="ChEBI" id="CHEBI:456216"/>
        <dbReference type="EC" id="6.3.3.2"/>
    </reaction>
</comment>
<comment type="cofactor">
    <cofactor evidence="1">
        <name>Mg(2+)</name>
        <dbReference type="ChEBI" id="CHEBI:18420"/>
    </cofactor>
</comment>
<comment type="subunit">
    <text evidence="1">Monomer.</text>
</comment>
<comment type="subcellular location">
    <subcellularLocation>
        <location evidence="1">Cytoplasm</location>
    </subcellularLocation>
</comment>
<comment type="similarity">
    <text evidence="3">Belongs to the 5-formyltetrahydrofolate cyclo-ligase family.</text>
</comment>